<organism>
    <name type="scientific">Drosophila melanogaster</name>
    <name type="common">Fruit fly</name>
    <dbReference type="NCBI Taxonomy" id="7227"/>
    <lineage>
        <taxon>Eukaryota</taxon>
        <taxon>Metazoa</taxon>
        <taxon>Ecdysozoa</taxon>
        <taxon>Arthropoda</taxon>
        <taxon>Hexapoda</taxon>
        <taxon>Insecta</taxon>
        <taxon>Pterygota</taxon>
        <taxon>Neoptera</taxon>
        <taxon>Endopterygota</taxon>
        <taxon>Diptera</taxon>
        <taxon>Brachycera</taxon>
        <taxon>Muscomorpha</taxon>
        <taxon>Ephydroidea</taxon>
        <taxon>Drosophilidae</taxon>
        <taxon>Drosophila</taxon>
        <taxon>Sophophora</taxon>
    </lineage>
</organism>
<evidence type="ECO:0000305" key="1"/>
<keyword id="KW-0002">3D-structure</keyword>
<keyword id="KW-1185">Reference proteome</keyword>
<keyword id="KW-0687">Ribonucleoprotein</keyword>
<keyword id="KW-0689">Ribosomal protein</keyword>
<sequence length="51" mass="6299">MAAHKSFRIKQKLAKKLKQNRSVPQWVRLRTGNTIRYNAKRRHWRRTKLKL</sequence>
<accession>O16130</accession>
<accession>Q9W1B7</accession>
<proteinExistence type="evidence at protein level"/>
<reference key="1">
    <citation type="journal article" date="1998" name="Korean J. Biol. Sci.">
        <title>Isolation and characterization of the ribosomal protein 46 gene in Drosophila melanogaster.</title>
        <authorList>
            <person name="Kim J.K."/>
            <person name="Lee C.C."/>
            <person name="Chung K.W."/>
        </authorList>
    </citation>
    <scope>NUCLEOTIDE SEQUENCE [MRNA]</scope>
    <source>
        <strain>Canton-S</strain>
    </source>
</reference>
<reference key="2">
    <citation type="journal article" date="2000" name="Science">
        <title>The genome sequence of Drosophila melanogaster.</title>
        <authorList>
            <person name="Adams M.D."/>
            <person name="Celniker S.E."/>
            <person name="Holt R.A."/>
            <person name="Evans C.A."/>
            <person name="Gocayne J.D."/>
            <person name="Amanatides P.G."/>
            <person name="Scherer S.E."/>
            <person name="Li P.W."/>
            <person name="Hoskins R.A."/>
            <person name="Galle R.F."/>
            <person name="George R.A."/>
            <person name="Lewis S.E."/>
            <person name="Richards S."/>
            <person name="Ashburner M."/>
            <person name="Henderson S.N."/>
            <person name="Sutton G.G."/>
            <person name="Wortman J.R."/>
            <person name="Yandell M.D."/>
            <person name="Zhang Q."/>
            <person name="Chen L.X."/>
            <person name="Brandon R.C."/>
            <person name="Rogers Y.-H.C."/>
            <person name="Blazej R.G."/>
            <person name="Champe M."/>
            <person name="Pfeiffer B.D."/>
            <person name="Wan K.H."/>
            <person name="Doyle C."/>
            <person name="Baxter E.G."/>
            <person name="Helt G."/>
            <person name="Nelson C.R."/>
            <person name="Miklos G.L.G."/>
            <person name="Abril J.F."/>
            <person name="Agbayani A."/>
            <person name="An H.-J."/>
            <person name="Andrews-Pfannkoch C."/>
            <person name="Baldwin D."/>
            <person name="Ballew R.M."/>
            <person name="Basu A."/>
            <person name="Baxendale J."/>
            <person name="Bayraktaroglu L."/>
            <person name="Beasley E.M."/>
            <person name="Beeson K.Y."/>
            <person name="Benos P.V."/>
            <person name="Berman B.P."/>
            <person name="Bhandari D."/>
            <person name="Bolshakov S."/>
            <person name="Borkova D."/>
            <person name="Botchan M.R."/>
            <person name="Bouck J."/>
            <person name="Brokstein P."/>
            <person name="Brottier P."/>
            <person name="Burtis K.C."/>
            <person name="Busam D.A."/>
            <person name="Butler H."/>
            <person name="Cadieu E."/>
            <person name="Center A."/>
            <person name="Chandra I."/>
            <person name="Cherry J.M."/>
            <person name="Cawley S."/>
            <person name="Dahlke C."/>
            <person name="Davenport L.B."/>
            <person name="Davies P."/>
            <person name="de Pablos B."/>
            <person name="Delcher A."/>
            <person name="Deng Z."/>
            <person name="Mays A.D."/>
            <person name="Dew I."/>
            <person name="Dietz S.M."/>
            <person name="Dodson K."/>
            <person name="Doup L.E."/>
            <person name="Downes M."/>
            <person name="Dugan-Rocha S."/>
            <person name="Dunkov B.C."/>
            <person name="Dunn P."/>
            <person name="Durbin K.J."/>
            <person name="Evangelista C.C."/>
            <person name="Ferraz C."/>
            <person name="Ferriera S."/>
            <person name="Fleischmann W."/>
            <person name="Fosler C."/>
            <person name="Gabrielian A.E."/>
            <person name="Garg N.S."/>
            <person name="Gelbart W.M."/>
            <person name="Glasser K."/>
            <person name="Glodek A."/>
            <person name="Gong F."/>
            <person name="Gorrell J.H."/>
            <person name="Gu Z."/>
            <person name="Guan P."/>
            <person name="Harris M."/>
            <person name="Harris N.L."/>
            <person name="Harvey D.A."/>
            <person name="Heiman T.J."/>
            <person name="Hernandez J.R."/>
            <person name="Houck J."/>
            <person name="Hostin D."/>
            <person name="Houston K.A."/>
            <person name="Howland T.J."/>
            <person name="Wei M.-H."/>
            <person name="Ibegwam C."/>
            <person name="Jalali M."/>
            <person name="Kalush F."/>
            <person name="Karpen G.H."/>
            <person name="Ke Z."/>
            <person name="Kennison J.A."/>
            <person name="Ketchum K.A."/>
            <person name="Kimmel B.E."/>
            <person name="Kodira C.D."/>
            <person name="Kraft C.L."/>
            <person name="Kravitz S."/>
            <person name="Kulp D."/>
            <person name="Lai Z."/>
            <person name="Lasko P."/>
            <person name="Lei Y."/>
            <person name="Levitsky A.A."/>
            <person name="Li J.H."/>
            <person name="Li Z."/>
            <person name="Liang Y."/>
            <person name="Lin X."/>
            <person name="Liu X."/>
            <person name="Mattei B."/>
            <person name="McIntosh T.C."/>
            <person name="McLeod M.P."/>
            <person name="McPherson D."/>
            <person name="Merkulov G."/>
            <person name="Milshina N.V."/>
            <person name="Mobarry C."/>
            <person name="Morris J."/>
            <person name="Moshrefi A."/>
            <person name="Mount S.M."/>
            <person name="Moy M."/>
            <person name="Murphy B."/>
            <person name="Murphy L."/>
            <person name="Muzny D.M."/>
            <person name="Nelson D.L."/>
            <person name="Nelson D.R."/>
            <person name="Nelson K.A."/>
            <person name="Nixon K."/>
            <person name="Nusskern D.R."/>
            <person name="Pacleb J.M."/>
            <person name="Palazzolo M."/>
            <person name="Pittman G.S."/>
            <person name="Pan S."/>
            <person name="Pollard J."/>
            <person name="Puri V."/>
            <person name="Reese M.G."/>
            <person name="Reinert K."/>
            <person name="Remington K."/>
            <person name="Saunders R.D.C."/>
            <person name="Scheeler F."/>
            <person name="Shen H."/>
            <person name="Shue B.C."/>
            <person name="Siden-Kiamos I."/>
            <person name="Simpson M."/>
            <person name="Skupski M.P."/>
            <person name="Smith T.J."/>
            <person name="Spier E."/>
            <person name="Spradling A.C."/>
            <person name="Stapleton M."/>
            <person name="Strong R."/>
            <person name="Sun E."/>
            <person name="Svirskas R."/>
            <person name="Tector C."/>
            <person name="Turner R."/>
            <person name="Venter E."/>
            <person name="Wang A.H."/>
            <person name="Wang X."/>
            <person name="Wang Z.-Y."/>
            <person name="Wassarman D.A."/>
            <person name="Weinstock G.M."/>
            <person name="Weissenbach J."/>
            <person name="Williams S.M."/>
            <person name="Woodage T."/>
            <person name="Worley K.C."/>
            <person name="Wu D."/>
            <person name="Yang S."/>
            <person name="Yao Q.A."/>
            <person name="Ye J."/>
            <person name="Yeh R.-F."/>
            <person name="Zaveri J.S."/>
            <person name="Zhan M."/>
            <person name="Zhang G."/>
            <person name="Zhao Q."/>
            <person name="Zheng L."/>
            <person name="Zheng X.H."/>
            <person name="Zhong F.N."/>
            <person name="Zhong W."/>
            <person name="Zhou X."/>
            <person name="Zhu S.C."/>
            <person name="Zhu X."/>
            <person name="Smith H.O."/>
            <person name="Gibbs R.A."/>
            <person name="Myers E.W."/>
            <person name="Rubin G.M."/>
            <person name="Venter J.C."/>
        </authorList>
    </citation>
    <scope>NUCLEOTIDE SEQUENCE [LARGE SCALE GENOMIC DNA]</scope>
    <source>
        <strain>Berkeley</strain>
    </source>
</reference>
<reference key="3">
    <citation type="journal article" date="2002" name="Genome Biol.">
        <title>Annotation of the Drosophila melanogaster euchromatic genome: a systematic review.</title>
        <authorList>
            <person name="Misra S."/>
            <person name="Crosby M.A."/>
            <person name="Mungall C.J."/>
            <person name="Matthews B.B."/>
            <person name="Campbell K.S."/>
            <person name="Hradecky P."/>
            <person name="Huang Y."/>
            <person name="Kaminker J.S."/>
            <person name="Millburn G.H."/>
            <person name="Prochnik S.E."/>
            <person name="Smith C.D."/>
            <person name="Tupy J.L."/>
            <person name="Whitfield E.J."/>
            <person name="Bayraktaroglu L."/>
            <person name="Berman B.P."/>
            <person name="Bettencourt B.R."/>
            <person name="Celniker S.E."/>
            <person name="de Grey A.D.N.J."/>
            <person name="Drysdale R.A."/>
            <person name="Harris N.L."/>
            <person name="Richter J."/>
            <person name="Russo S."/>
            <person name="Schroeder A.J."/>
            <person name="Shu S.Q."/>
            <person name="Stapleton M."/>
            <person name="Yamada C."/>
            <person name="Ashburner M."/>
            <person name="Gelbart W.M."/>
            <person name="Rubin G.M."/>
            <person name="Lewis S.E."/>
        </authorList>
    </citation>
    <scope>GENOME REANNOTATION</scope>
    <source>
        <strain>Berkeley</strain>
    </source>
</reference>
<reference key="4">
    <citation type="journal article" date="2002" name="Genome Biol.">
        <title>A Drosophila full-length cDNA resource.</title>
        <authorList>
            <person name="Stapleton M."/>
            <person name="Carlson J.W."/>
            <person name="Brokstein P."/>
            <person name="Yu C."/>
            <person name="Champe M."/>
            <person name="George R.A."/>
            <person name="Guarin H."/>
            <person name="Kronmiller B."/>
            <person name="Pacleb J.M."/>
            <person name="Park S."/>
            <person name="Wan K.H."/>
            <person name="Rubin G.M."/>
            <person name="Celniker S.E."/>
        </authorList>
    </citation>
    <scope>NUCLEOTIDE SEQUENCE [LARGE SCALE MRNA]</scope>
    <source>
        <strain>Berkeley</strain>
        <tissue>Head</tissue>
    </source>
</reference>
<reference key="5">
    <citation type="journal article" date="2013" name="Nature">
        <title>Structures of the human and Drosophila 80S ribosome.</title>
        <authorList>
            <person name="Anger A.M."/>
            <person name="Armache J.P."/>
            <person name="Berninghausen O."/>
            <person name="Habeck M."/>
            <person name="Subklewe M."/>
            <person name="Wilson D.N."/>
            <person name="Beckmann R."/>
        </authorList>
    </citation>
    <scope>STRUCTURE BY ELECTRON MICROSCOPY (6.0 ANGSTROMS) OF THE 80S RIBOSOME</scope>
</reference>
<feature type="chain" id="PRO_0000127031" description="Large ribosomal subunit protein eL39">
    <location>
        <begin position="1"/>
        <end position="51"/>
    </location>
</feature>
<feature type="sequence conflict" description="In Ref. 1; AAB65802." evidence="1" ref="1">
    <original>R</original>
    <variation>A</variation>
    <location>
        <position position="30"/>
    </location>
</feature>
<name>RL39_DROME</name>
<gene>
    <name type="primary">RpL39</name>
    <name type="synonym">rp46</name>
    <name type="synonym">RpL46</name>
    <name type="ORF">CG3997</name>
</gene>
<comment type="similarity">
    <text evidence="1">Belongs to the eukaryotic ribosomal protein eL39 family.</text>
</comment>
<dbReference type="EMBL" id="AF012422">
    <property type="protein sequence ID" value="AAB65802.1"/>
    <property type="molecule type" value="mRNA"/>
</dbReference>
<dbReference type="EMBL" id="AE013599">
    <property type="protein sequence ID" value="AAF47154.1"/>
    <property type="molecule type" value="Genomic_DNA"/>
</dbReference>
<dbReference type="EMBL" id="AY071712">
    <property type="protein sequence ID" value="AAL49334.1"/>
    <property type="molecule type" value="mRNA"/>
</dbReference>
<dbReference type="RefSeq" id="NP_477314.1">
    <property type="nucleotide sequence ID" value="NM_057966.5"/>
</dbReference>
<dbReference type="PDB" id="4V6W">
    <property type="method" value="EM"/>
    <property type="resolution" value="6.00 A"/>
    <property type="chains" value="Cl=1-51"/>
</dbReference>
<dbReference type="PDB" id="6XU6">
    <property type="method" value="EM"/>
    <property type="resolution" value="3.50 A"/>
    <property type="chains" value="Cl=2-51"/>
</dbReference>
<dbReference type="PDB" id="6XU7">
    <property type="method" value="EM"/>
    <property type="resolution" value="4.90 A"/>
    <property type="chains" value="Cl=2-51"/>
</dbReference>
<dbReference type="PDB" id="6XU8">
    <property type="method" value="EM"/>
    <property type="resolution" value="3.00 A"/>
    <property type="chains" value="Cl=2-51"/>
</dbReference>
<dbReference type="PDBsum" id="4V6W"/>
<dbReference type="PDBsum" id="6XU6"/>
<dbReference type="PDBsum" id="6XU7"/>
<dbReference type="PDBsum" id="6XU8"/>
<dbReference type="EMDB" id="EMD-10622"/>
<dbReference type="EMDB" id="EMD-10623"/>
<dbReference type="EMDB" id="EMD-10624"/>
<dbReference type="SMR" id="O16130"/>
<dbReference type="BioGRID" id="63428">
    <property type="interactions" value="95"/>
</dbReference>
<dbReference type="DIP" id="DIP-19057N"/>
<dbReference type="FunCoup" id="O16130">
    <property type="interactions" value="446"/>
</dbReference>
<dbReference type="STRING" id="7227.FBpp0072094"/>
<dbReference type="PaxDb" id="7227-FBpp0072094"/>
<dbReference type="DNASU" id="37849"/>
<dbReference type="EnsemblMetazoa" id="FBtr0072185">
    <property type="protein sequence ID" value="FBpp0072094"/>
    <property type="gene ID" value="FBgn0023170"/>
</dbReference>
<dbReference type="GeneID" id="37849"/>
<dbReference type="KEGG" id="dme:Dmel_CG3997"/>
<dbReference type="AGR" id="FB:FBgn0023170"/>
<dbReference type="CTD" id="6170"/>
<dbReference type="FlyBase" id="FBgn0023170">
    <property type="gene designation" value="RpL39"/>
</dbReference>
<dbReference type="VEuPathDB" id="VectorBase:FBgn0023170"/>
<dbReference type="eggNOG" id="KOG0002">
    <property type="taxonomic scope" value="Eukaryota"/>
</dbReference>
<dbReference type="GeneTree" id="ENSGT00940000175753"/>
<dbReference type="HOGENOM" id="CLU_181948_3_0_1"/>
<dbReference type="InParanoid" id="O16130"/>
<dbReference type="OMA" id="QNWRRMK"/>
<dbReference type="OrthoDB" id="6332053at2759"/>
<dbReference type="PhylomeDB" id="O16130"/>
<dbReference type="Reactome" id="R-DME-156827">
    <property type="pathway name" value="L13a-mediated translational silencing of Ceruloplasmin expression"/>
</dbReference>
<dbReference type="Reactome" id="R-DME-1799339">
    <property type="pathway name" value="SRP-dependent cotranslational protein targeting to membrane"/>
</dbReference>
<dbReference type="Reactome" id="R-DME-72689">
    <property type="pathway name" value="Formation of a pool of free 40S subunits"/>
</dbReference>
<dbReference type="Reactome" id="R-DME-72706">
    <property type="pathway name" value="GTP hydrolysis and joining of the 60S ribosomal subunit"/>
</dbReference>
<dbReference type="Reactome" id="R-DME-975956">
    <property type="pathway name" value="Nonsense Mediated Decay (NMD) independent of the Exon Junction Complex (EJC)"/>
</dbReference>
<dbReference type="Reactome" id="R-DME-975957">
    <property type="pathway name" value="Nonsense Mediated Decay (NMD) enhanced by the Exon Junction Complex (EJC)"/>
</dbReference>
<dbReference type="BioGRID-ORCS" id="37849">
    <property type="hits" value="3 hits in 3 CRISPR screens"/>
</dbReference>
<dbReference type="ChiTaRS" id="RpL39">
    <property type="organism name" value="fly"/>
</dbReference>
<dbReference type="GenomeRNAi" id="37849"/>
<dbReference type="PRO" id="PR:O16130"/>
<dbReference type="Proteomes" id="UP000000803">
    <property type="component" value="Chromosome 2R"/>
</dbReference>
<dbReference type="Bgee" id="FBgn0023170">
    <property type="expression patterns" value="Expressed in cleaving embryo and 290 other cell types or tissues"/>
</dbReference>
<dbReference type="ExpressionAtlas" id="O16130">
    <property type="expression patterns" value="baseline and differential"/>
</dbReference>
<dbReference type="GO" id="GO:0022625">
    <property type="term" value="C:cytosolic large ribosomal subunit"/>
    <property type="evidence" value="ECO:0000318"/>
    <property type="project" value="GO_Central"/>
</dbReference>
<dbReference type="GO" id="GO:0003735">
    <property type="term" value="F:structural constituent of ribosome"/>
    <property type="evidence" value="ECO:0000304"/>
    <property type="project" value="FlyBase"/>
</dbReference>
<dbReference type="GO" id="GO:0002181">
    <property type="term" value="P:cytoplasmic translation"/>
    <property type="evidence" value="ECO:0000304"/>
    <property type="project" value="FlyBase"/>
</dbReference>
<dbReference type="FunFam" id="1.10.1620.10:FF:000001">
    <property type="entry name" value="60S ribosomal protein-like L39"/>
    <property type="match status" value="1"/>
</dbReference>
<dbReference type="Gene3D" id="1.10.1620.10">
    <property type="entry name" value="Ribosomal protein L39e"/>
    <property type="match status" value="1"/>
</dbReference>
<dbReference type="HAMAP" id="MF_00629">
    <property type="entry name" value="Ribosomal_eL39"/>
    <property type="match status" value="1"/>
</dbReference>
<dbReference type="InterPro" id="IPR000077">
    <property type="entry name" value="Ribosomal_eL39"/>
</dbReference>
<dbReference type="InterPro" id="IPR020083">
    <property type="entry name" value="Ribosomal_eL39_CS"/>
</dbReference>
<dbReference type="InterPro" id="IPR023626">
    <property type="entry name" value="Ribosomal_eL39_dom_sf"/>
</dbReference>
<dbReference type="PANTHER" id="PTHR19970:SF0">
    <property type="entry name" value="LARGE RIBOSOMAL SUBUNIT PROTEIN EL39"/>
    <property type="match status" value="1"/>
</dbReference>
<dbReference type="PANTHER" id="PTHR19970">
    <property type="entry name" value="RIBOSOMAL PROTEIN L39E"/>
    <property type="match status" value="1"/>
</dbReference>
<dbReference type="Pfam" id="PF00832">
    <property type="entry name" value="Ribosomal_L39"/>
    <property type="match status" value="1"/>
</dbReference>
<dbReference type="SUPFAM" id="SSF48662">
    <property type="entry name" value="Ribosomal protein L39e"/>
    <property type="match status" value="1"/>
</dbReference>
<dbReference type="PROSITE" id="PS00051">
    <property type="entry name" value="RIBOSOMAL_L39E"/>
    <property type="match status" value="1"/>
</dbReference>
<protein>
    <recommendedName>
        <fullName evidence="1">Large ribosomal subunit protein eL39</fullName>
    </recommendedName>
    <alternativeName>
        <fullName>60S ribosomal protein L39</fullName>
    </alternativeName>
    <alternativeName>
        <fullName>Ribosomal protein 46</fullName>
    </alternativeName>
</protein>